<sequence length="121" mass="13438">MIQQETFLTVADNSGAKRLQCIRVLGSNRRYAHVGDVIVASVKDAMPNMGVKKSDVVKAVVVRTRATMRRETGNSIRFDDNAAVLINDDQNPRGTRVFGPVARELRERNFTKIVSLAPEVI</sequence>
<dbReference type="EMBL" id="CP000553">
    <property type="protein sequence ID" value="ABM76549.1"/>
    <property type="molecule type" value="Genomic_DNA"/>
</dbReference>
<dbReference type="RefSeq" id="WP_011295463.1">
    <property type="nucleotide sequence ID" value="NC_008819.1"/>
</dbReference>
<dbReference type="SMR" id="A2C4Y9"/>
<dbReference type="KEGG" id="pme:NATL1_19931"/>
<dbReference type="eggNOG" id="COG0093">
    <property type="taxonomic scope" value="Bacteria"/>
</dbReference>
<dbReference type="HOGENOM" id="CLU_095071_2_1_3"/>
<dbReference type="Proteomes" id="UP000002592">
    <property type="component" value="Chromosome"/>
</dbReference>
<dbReference type="GO" id="GO:0022625">
    <property type="term" value="C:cytosolic large ribosomal subunit"/>
    <property type="evidence" value="ECO:0007669"/>
    <property type="project" value="TreeGrafter"/>
</dbReference>
<dbReference type="GO" id="GO:0070180">
    <property type="term" value="F:large ribosomal subunit rRNA binding"/>
    <property type="evidence" value="ECO:0007669"/>
    <property type="project" value="TreeGrafter"/>
</dbReference>
<dbReference type="GO" id="GO:0003735">
    <property type="term" value="F:structural constituent of ribosome"/>
    <property type="evidence" value="ECO:0007669"/>
    <property type="project" value="InterPro"/>
</dbReference>
<dbReference type="GO" id="GO:0006412">
    <property type="term" value="P:translation"/>
    <property type="evidence" value="ECO:0007669"/>
    <property type="project" value="UniProtKB-UniRule"/>
</dbReference>
<dbReference type="CDD" id="cd00337">
    <property type="entry name" value="Ribosomal_uL14"/>
    <property type="match status" value="1"/>
</dbReference>
<dbReference type="FunFam" id="2.40.150.20:FF:000001">
    <property type="entry name" value="50S ribosomal protein L14"/>
    <property type="match status" value="1"/>
</dbReference>
<dbReference type="Gene3D" id="2.40.150.20">
    <property type="entry name" value="Ribosomal protein L14"/>
    <property type="match status" value="1"/>
</dbReference>
<dbReference type="HAMAP" id="MF_01367">
    <property type="entry name" value="Ribosomal_uL14"/>
    <property type="match status" value="1"/>
</dbReference>
<dbReference type="InterPro" id="IPR000218">
    <property type="entry name" value="Ribosomal_uL14"/>
</dbReference>
<dbReference type="InterPro" id="IPR005745">
    <property type="entry name" value="Ribosomal_uL14_bac-type"/>
</dbReference>
<dbReference type="InterPro" id="IPR036853">
    <property type="entry name" value="Ribosomal_uL14_sf"/>
</dbReference>
<dbReference type="NCBIfam" id="TIGR01067">
    <property type="entry name" value="rplN_bact"/>
    <property type="match status" value="1"/>
</dbReference>
<dbReference type="PANTHER" id="PTHR11761">
    <property type="entry name" value="50S/60S RIBOSOMAL PROTEIN L14/L23"/>
    <property type="match status" value="1"/>
</dbReference>
<dbReference type="PANTHER" id="PTHR11761:SF3">
    <property type="entry name" value="LARGE RIBOSOMAL SUBUNIT PROTEIN UL14M"/>
    <property type="match status" value="1"/>
</dbReference>
<dbReference type="Pfam" id="PF00238">
    <property type="entry name" value="Ribosomal_L14"/>
    <property type="match status" value="1"/>
</dbReference>
<dbReference type="SMART" id="SM01374">
    <property type="entry name" value="Ribosomal_L14"/>
    <property type="match status" value="1"/>
</dbReference>
<dbReference type="SUPFAM" id="SSF50193">
    <property type="entry name" value="Ribosomal protein L14"/>
    <property type="match status" value="1"/>
</dbReference>
<gene>
    <name evidence="1" type="primary">rplN</name>
    <name evidence="1" type="synonym">rpl14</name>
    <name type="ordered locus">NATL1_19931</name>
</gene>
<name>RL14_PROM1</name>
<protein>
    <recommendedName>
        <fullName evidence="1">Large ribosomal subunit protein uL14</fullName>
    </recommendedName>
    <alternativeName>
        <fullName evidence="2">50S ribosomal protein L14</fullName>
    </alternativeName>
</protein>
<reference key="1">
    <citation type="journal article" date="2007" name="PLoS Genet.">
        <title>Patterns and implications of gene gain and loss in the evolution of Prochlorococcus.</title>
        <authorList>
            <person name="Kettler G.C."/>
            <person name="Martiny A.C."/>
            <person name="Huang K."/>
            <person name="Zucker J."/>
            <person name="Coleman M.L."/>
            <person name="Rodrigue S."/>
            <person name="Chen F."/>
            <person name="Lapidus A."/>
            <person name="Ferriera S."/>
            <person name="Johnson J."/>
            <person name="Steglich C."/>
            <person name="Church G.M."/>
            <person name="Richardson P."/>
            <person name="Chisholm S.W."/>
        </authorList>
    </citation>
    <scope>NUCLEOTIDE SEQUENCE [LARGE SCALE GENOMIC DNA]</scope>
    <source>
        <strain>NATL1A</strain>
    </source>
</reference>
<comment type="function">
    <text evidence="1">Binds to 23S rRNA. Forms part of two intersubunit bridges in the 70S ribosome.</text>
</comment>
<comment type="subunit">
    <text evidence="1">Part of the 50S ribosomal subunit. Forms a cluster with proteins L3 and L19. In the 70S ribosome, L14 and L19 interact and together make contacts with the 16S rRNA in bridges B5 and B8.</text>
</comment>
<comment type="similarity">
    <text evidence="1">Belongs to the universal ribosomal protein uL14 family.</text>
</comment>
<organism>
    <name type="scientific">Prochlorococcus marinus (strain NATL1A)</name>
    <dbReference type="NCBI Taxonomy" id="167555"/>
    <lineage>
        <taxon>Bacteria</taxon>
        <taxon>Bacillati</taxon>
        <taxon>Cyanobacteriota</taxon>
        <taxon>Cyanophyceae</taxon>
        <taxon>Synechococcales</taxon>
        <taxon>Prochlorococcaceae</taxon>
        <taxon>Prochlorococcus</taxon>
    </lineage>
</organism>
<proteinExistence type="inferred from homology"/>
<keyword id="KW-0687">Ribonucleoprotein</keyword>
<keyword id="KW-0689">Ribosomal protein</keyword>
<keyword id="KW-0694">RNA-binding</keyword>
<keyword id="KW-0699">rRNA-binding</keyword>
<evidence type="ECO:0000255" key="1">
    <source>
        <dbReference type="HAMAP-Rule" id="MF_01367"/>
    </source>
</evidence>
<evidence type="ECO:0000305" key="2"/>
<accession>A2C4Y9</accession>
<feature type="chain" id="PRO_1000055667" description="Large ribosomal subunit protein uL14">
    <location>
        <begin position="1"/>
        <end position="121"/>
    </location>
</feature>